<keyword id="KW-1185">Reference proteome</keyword>
<protein>
    <recommendedName>
        <fullName>Uncharacterized protein MT1599.1</fullName>
    </recommendedName>
</protein>
<proteinExistence type="predicted"/>
<dbReference type="EMBL" id="AE000516">
    <property type="status" value="NOT_ANNOTATED_CDS"/>
    <property type="molecule type" value="Genomic_DNA"/>
</dbReference>
<dbReference type="PIR" id="B70762">
    <property type="entry name" value="B70762"/>
</dbReference>
<dbReference type="SMR" id="P9WLU4"/>
<dbReference type="Proteomes" id="UP000001020">
    <property type="component" value="Chromosome"/>
</dbReference>
<dbReference type="Gene3D" id="3.40.50.12780">
    <property type="entry name" value="N-terminal domain of ligase-like"/>
    <property type="match status" value="1"/>
</dbReference>
<dbReference type="InterPro" id="IPR000873">
    <property type="entry name" value="AMP-dep_synth/lig_dom"/>
</dbReference>
<dbReference type="InterPro" id="IPR042099">
    <property type="entry name" value="ANL_N_sf"/>
</dbReference>
<dbReference type="InterPro" id="IPR050237">
    <property type="entry name" value="ATP-dep_AMP-bd_enzyme"/>
</dbReference>
<dbReference type="PANTHER" id="PTHR43767">
    <property type="entry name" value="LONG-CHAIN-FATTY-ACID--COA LIGASE"/>
    <property type="match status" value="1"/>
</dbReference>
<dbReference type="PANTHER" id="PTHR43767:SF1">
    <property type="entry name" value="NONRIBOSOMAL PEPTIDE SYNTHASE PES1 (EUROFUNG)-RELATED"/>
    <property type="match status" value="1"/>
</dbReference>
<dbReference type="Pfam" id="PF00501">
    <property type="entry name" value="AMP-binding"/>
    <property type="match status" value="1"/>
</dbReference>
<dbReference type="SUPFAM" id="SSF56801">
    <property type="entry name" value="Acetyl-CoA synthetase-like"/>
    <property type="match status" value="1"/>
</dbReference>
<reference key="1">
    <citation type="journal article" date="2002" name="J. Bacteriol.">
        <title>Whole-genome comparison of Mycobacterium tuberculosis clinical and laboratory strains.</title>
        <authorList>
            <person name="Fleischmann R.D."/>
            <person name="Alland D."/>
            <person name="Eisen J.A."/>
            <person name="Carpenter L."/>
            <person name="White O."/>
            <person name="Peterson J.D."/>
            <person name="DeBoy R.T."/>
            <person name="Dodson R.J."/>
            <person name="Gwinn M.L."/>
            <person name="Haft D.H."/>
            <person name="Hickey E.K."/>
            <person name="Kolonay J.F."/>
            <person name="Nelson W.C."/>
            <person name="Umayam L.A."/>
            <person name="Ermolaeva M.D."/>
            <person name="Salzberg S.L."/>
            <person name="Delcher A."/>
            <person name="Utterback T.R."/>
            <person name="Weidman J.F."/>
            <person name="Khouri H.M."/>
            <person name="Gill J."/>
            <person name="Mikula A."/>
            <person name="Bishai W."/>
            <person name="Jacobs W.R. Jr."/>
            <person name="Venter J.C."/>
            <person name="Fraser C.M."/>
        </authorList>
    </citation>
    <scope>NUCLEOTIDE SEQUENCE [LARGE SCALE GENOMIC DNA]</scope>
    <source>
        <strain>CDC 1551 / Oshkosh</strain>
    </source>
</reference>
<name>Y1549_MYCTO</name>
<gene>
    <name type="ordered locus">MT1599.1</name>
</gene>
<feature type="chain" id="PRO_0000427418" description="Uncharacterized protein MT1599.1">
    <location>
        <begin position="1"/>
        <end position="182"/>
    </location>
</feature>
<organism>
    <name type="scientific">Mycobacterium tuberculosis (strain CDC 1551 / Oshkosh)</name>
    <dbReference type="NCBI Taxonomy" id="83331"/>
    <lineage>
        <taxon>Bacteria</taxon>
        <taxon>Bacillati</taxon>
        <taxon>Actinomycetota</taxon>
        <taxon>Actinomycetes</taxon>
        <taxon>Mycobacteriales</taxon>
        <taxon>Mycobacteriaceae</taxon>
        <taxon>Mycobacterium</taxon>
        <taxon>Mycobacterium tuberculosis complex</taxon>
    </lineage>
</organism>
<sequence length="182" mass="20271">MGRHGSRWSRPPCFRVLRLWTYAHRCDLGHTDPLSRRTEMTTTERPTTMCEAFQRTAVMDPDAVALRTPGGNQTMTWRDYAAQVRRVAAGLAGLGVRRGDTVSLMMANRIEFYPLDVGAQHVGATSFSVYNTLPAEQLTYVFDNAGTKVVICEQQYVDRVRASGVPIEHIVCVDGAPPARSR</sequence>
<accession>P9WLU4</accession>
<accession>L0T9Y2</accession>
<accession>Q10777</accession>